<name>AMPA_RALPJ</name>
<feature type="chain" id="PRO_1000098338" description="Probable cytosol aminopeptidase">
    <location>
        <begin position="1"/>
        <end position="502"/>
    </location>
</feature>
<feature type="active site" evidence="1">
    <location>
        <position position="287"/>
    </location>
</feature>
<feature type="active site" evidence="1">
    <location>
        <position position="361"/>
    </location>
</feature>
<feature type="binding site" evidence="1">
    <location>
        <position position="275"/>
    </location>
    <ligand>
        <name>Mn(2+)</name>
        <dbReference type="ChEBI" id="CHEBI:29035"/>
        <label>2</label>
    </ligand>
</feature>
<feature type="binding site" evidence="1">
    <location>
        <position position="280"/>
    </location>
    <ligand>
        <name>Mn(2+)</name>
        <dbReference type="ChEBI" id="CHEBI:29035"/>
        <label>1</label>
    </ligand>
</feature>
<feature type="binding site" evidence="1">
    <location>
        <position position="280"/>
    </location>
    <ligand>
        <name>Mn(2+)</name>
        <dbReference type="ChEBI" id="CHEBI:29035"/>
        <label>2</label>
    </ligand>
</feature>
<feature type="binding site" evidence="1">
    <location>
        <position position="298"/>
    </location>
    <ligand>
        <name>Mn(2+)</name>
        <dbReference type="ChEBI" id="CHEBI:29035"/>
        <label>2</label>
    </ligand>
</feature>
<feature type="binding site" evidence="1">
    <location>
        <position position="357"/>
    </location>
    <ligand>
        <name>Mn(2+)</name>
        <dbReference type="ChEBI" id="CHEBI:29035"/>
        <label>1</label>
    </ligand>
</feature>
<feature type="binding site" evidence="1">
    <location>
        <position position="359"/>
    </location>
    <ligand>
        <name>Mn(2+)</name>
        <dbReference type="ChEBI" id="CHEBI:29035"/>
        <label>1</label>
    </ligand>
</feature>
<feature type="binding site" evidence="1">
    <location>
        <position position="359"/>
    </location>
    <ligand>
        <name>Mn(2+)</name>
        <dbReference type="ChEBI" id="CHEBI:29035"/>
        <label>2</label>
    </ligand>
</feature>
<keyword id="KW-0031">Aminopeptidase</keyword>
<keyword id="KW-0963">Cytoplasm</keyword>
<keyword id="KW-0378">Hydrolase</keyword>
<keyword id="KW-0464">Manganese</keyword>
<keyword id="KW-0479">Metal-binding</keyword>
<keyword id="KW-0645">Protease</keyword>
<evidence type="ECO:0000255" key="1">
    <source>
        <dbReference type="HAMAP-Rule" id="MF_00181"/>
    </source>
</evidence>
<reference key="1">
    <citation type="submission" date="2008-05" db="EMBL/GenBank/DDBJ databases">
        <title>Complete sequence of chromosome 1 of Ralstonia pickettii 12J.</title>
        <authorList>
            <person name="Lucas S."/>
            <person name="Copeland A."/>
            <person name="Lapidus A."/>
            <person name="Glavina del Rio T."/>
            <person name="Dalin E."/>
            <person name="Tice H."/>
            <person name="Bruce D."/>
            <person name="Goodwin L."/>
            <person name="Pitluck S."/>
            <person name="Meincke L."/>
            <person name="Brettin T."/>
            <person name="Detter J.C."/>
            <person name="Han C."/>
            <person name="Kuske C.R."/>
            <person name="Schmutz J."/>
            <person name="Larimer F."/>
            <person name="Land M."/>
            <person name="Hauser L."/>
            <person name="Kyrpides N."/>
            <person name="Mikhailova N."/>
            <person name="Marsh T."/>
            <person name="Richardson P."/>
        </authorList>
    </citation>
    <scope>NUCLEOTIDE SEQUENCE [LARGE SCALE GENOMIC DNA]</scope>
    <source>
        <strain>12J</strain>
    </source>
</reference>
<protein>
    <recommendedName>
        <fullName evidence="1">Probable cytosol aminopeptidase</fullName>
        <ecNumber evidence="1">3.4.11.1</ecNumber>
    </recommendedName>
    <alternativeName>
        <fullName evidence="1">Leucine aminopeptidase</fullName>
        <shortName evidence="1">LAP</shortName>
        <ecNumber evidence="1">3.4.11.10</ecNumber>
    </alternativeName>
    <alternativeName>
        <fullName evidence="1">Leucyl aminopeptidase</fullName>
    </alternativeName>
</protein>
<accession>B2UAK8</accession>
<gene>
    <name evidence="1" type="primary">pepA</name>
    <name type="ordered locus">Rpic_2679</name>
</gene>
<dbReference type="EC" id="3.4.11.1" evidence="1"/>
<dbReference type="EC" id="3.4.11.10" evidence="1"/>
<dbReference type="EMBL" id="CP001068">
    <property type="protein sequence ID" value="ACD27805.1"/>
    <property type="molecule type" value="Genomic_DNA"/>
</dbReference>
<dbReference type="SMR" id="B2UAK8"/>
<dbReference type="STRING" id="402626.Rpic_2679"/>
<dbReference type="MEROPS" id="M17.003"/>
<dbReference type="KEGG" id="rpi:Rpic_2679"/>
<dbReference type="eggNOG" id="COG0260">
    <property type="taxonomic scope" value="Bacteria"/>
</dbReference>
<dbReference type="HOGENOM" id="CLU_013734_2_2_4"/>
<dbReference type="GO" id="GO:0005737">
    <property type="term" value="C:cytoplasm"/>
    <property type="evidence" value="ECO:0007669"/>
    <property type="project" value="UniProtKB-SubCell"/>
</dbReference>
<dbReference type="GO" id="GO:0030145">
    <property type="term" value="F:manganese ion binding"/>
    <property type="evidence" value="ECO:0007669"/>
    <property type="project" value="UniProtKB-UniRule"/>
</dbReference>
<dbReference type="GO" id="GO:0070006">
    <property type="term" value="F:metalloaminopeptidase activity"/>
    <property type="evidence" value="ECO:0007669"/>
    <property type="project" value="InterPro"/>
</dbReference>
<dbReference type="GO" id="GO:0006508">
    <property type="term" value="P:proteolysis"/>
    <property type="evidence" value="ECO:0007669"/>
    <property type="project" value="UniProtKB-KW"/>
</dbReference>
<dbReference type="CDD" id="cd00433">
    <property type="entry name" value="Peptidase_M17"/>
    <property type="match status" value="1"/>
</dbReference>
<dbReference type="FunFam" id="3.40.630.10:FF:000004">
    <property type="entry name" value="Probable cytosol aminopeptidase"/>
    <property type="match status" value="1"/>
</dbReference>
<dbReference type="Gene3D" id="3.40.220.10">
    <property type="entry name" value="Leucine Aminopeptidase, subunit E, domain 1"/>
    <property type="match status" value="1"/>
</dbReference>
<dbReference type="Gene3D" id="3.40.630.10">
    <property type="entry name" value="Zn peptidases"/>
    <property type="match status" value="1"/>
</dbReference>
<dbReference type="HAMAP" id="MF_00181">
    <property type="entry name" value="Cytosol_peptidase_M17"/>
    <property type="match status" value="1"/>
</dbReference>
<dbReference type="InterPro" id="IPR011356">
    <property type="entry name" value="Leucine_aapep/pepB"/>
</dbReference>
<dbReference type="InterPro" id="IPR043472">
    <property type="entry name" value="Macro_dom-like"/>
</dbReference>
<dbReference type="InterPro" id="IPR000819">
    <property type="entry name" value="Peptidase_M17_C"/>
</dbReference>
<dbReference type="InterPro" id="IPR023042">
    <property type="entry name" value="Peptidase_M17_leu_NH2_pept"/>
</dbReference>
<dbReference type="InterPro" id="IPR008283">
    <property type="entry name" value="Peptidase_M17_N"/>
</dbReference>
<dbReference type="NCBIfam" id="NF002073">
    <property type="entry name" value="PRK00913.1-2"/>
    <property type="match status" value="1"/>
</dbReference>
<dbReference type="NCBIfam" id="NF002074">
    <property type="entry name" value="PRK00913.1-4"/>
    <property type="match status" value="1"/>
</dbReference>
<dbReference type="NCBIfam" id="NF002077">
    <property type="entry name" value="PRK00913.2-4"/>
    <property type="match status" value="1"/>
</dbReference>
<dbReference type="PANTHER" id="PTHR11963:SF23">
    <property type="entry name" value="CYTOSOL AMINOPEPTIDASE"/>
    <property type="match status" value="1"/>
</dbReference>
<dbReference type="PANTHER" id="PTHR11963">
    <property type="entry name" value="LEUCINE AMINOPEPTIDASE-RELATED"/>
    <property type="match status" value="1"/>
</dbReference>
<dbReference type="Pfam" id="PF00883">
    <property type="entry name" value="Peptidase_M17"/>
    <property type="match status" value="1"/>
</dbReference>
<dbReference type="Pfam" id="PF02789">
    <property type="entry name" value="Peptidase_M17_N"/>
    <property type="match status" value="1"/>
</dbReference>
<dbReference type="PRINTS" id="PR00481">
    <property type="entry name" value="LAMNOPPTDASE"/>
</dbReference>
<dbReference type="SUPFAM" id="SSF52949">
    <property type="entry name" value="Macro domain-like"/>
    <property type="match status" value="1"/>
</dbReference>
<dbReference type="SUPFAM" id="SSF53187">
    <property type="entry name" value="Zn-dependent exopeptidases"/>
    <property type="match status" value="1"/>
</dbReference>
<dbReference type="PROSITE" id="PS00631">
    <property type="entry name" value="CYTOSOL_AP"/>
    <property type="match status" value="1"/>
</dbReference>
<proteinExistence type="inferred from homology"/>
<comment type="function">
    <text evidence="1">Presumably involved in the processing and regular turnover of intracellular proteins. Catalyzes the removal of unsubstituted N-terminal amino acids from various peptides.</text>
</comment>
<comment type="catalytic activity">
    <reaction evidence="1">
        <text>Release of an N-terminal amino acid, Xaa-|-Yaa-, in which Xaa is preferably Leu, but may be other amino acids including Pro although not Arg or Lys, and Yaa may be Pro. Amino acid amides and methyl esters are also readily hydrolyzed, but rates on arylamides are exceedingly low.</text>
        <dbReference type="EC" id="3.4.11.1"/>
    </reaction>
</comment>
<comment type="catalytic activity">
    <reaction evidence="1">
        <text>Release of an N-terminal amino acid, preferentially leucine, but not glutamic or aspartic acids.</text>
        <dbReference type="EC" id="3.4.11.10"/>
    </reaction>
</comment>
<comment type="cofactor">
    <cofactor evidence="1">
        <name>Mn(2+)</name>
        <dbReference type="ChEBI" id="CHEBI:29035"/>
    </cofactor>
    <text evidence="1">Binds 2 manganese ions per subunit.</text>
</comment>
<comment type="subcellular location">
    <subcellularLocation>
        <location evidence="1">Cytoplasm</location>
    </subcellularLocation>
</comment>
<comment type="similarity">
    <text evidence="1">Belongs to the peptidase M17 family.</text>
</comment>
<organism>
    <name type="scientific">Ralstonia pickettii (strain 12J)</name>
    <dbReference type="NCBI Taxonomy" id="402626"/>
    <lineage>
        <taxon>Bacteria</taxon>
        <taxon>Pseudomonadati</taxon>
        <taxon>Pseudomonadota</taxon>
        <taxon>Betaproteobacteria</taxon>
        <taxon>Burkholderiales</taxon>
        <taxon>Burkholderiaceae</taxon>
        <taxon>Ralstonia</taxon>
    </lineage>
</organism>
<sequence length="502" mass="52987">MEFSTKALDWAKAGALAAKSDCLVIGLFESQTLAGAAKALDVATKGLVARLVKLGDFEGKRGTSLLLHEVAGVGAARVLLVGLGKEADFTDRAYAEAVRTALRALASTKAASVTWTLTEHTARDKDTAWAVLTAVTLIREASYRFIERHPELKSKRDKNGTGLRKLVLAVPAADAKTASVAAARGTAIANGMDLTRDLGNLPSNICTPTYLANTARQIAKDFKLKVEVLGRKQIEALKMGAFLAVTKGSVEPPAFIVLRYEGGPAKQAPVVLVGKGITFDTGGISLKPGEGMDEMKYDMCGAASVLGTLRAVAEMGLKQNVIAVVPTCENMPSGIATKPGDVVTSMSGQTIEILNTDAEGRLILCDALTYVERFKPAVVIDVATLTGACIIALGHINTGMYARSDALADALVAAGKQSLDTAWRMPLDEEYQEQLKSNFADMGNIGGRPAGSVTAACFLARFTEKYDWAHLDIAGTAWKSGAAKGATGRPVPLLTRFLMDRG</sequence>